<accession>C1KWC5</accession>
<gene>
    <name evidence="1" type="primary">rpoZ</name>
    <name type="ordered locus">Lm4b_01842</name>
</gene>
<organism>
    <name type="scientific">Listeria monocytogenes serotype 4b (strain CLIP80459)</name>
    <dbReference type="NCBI Taxonomy" id="568819"/>
    <lineage>
        <taxon>Bacteria</taxon>
        <taxon>Bacillati</taxon>
        <taxon>Bacillota</taxon>
        <taxon>Bacilli</taxon>
        <taxon>Bacillales</taxon>
        <taxon>Listeriaceae</taxon>
        <taxon>Listeria</taxon>
    </lineage>
</organism>
<proteinExistence type="inferred from homology"/>
<feature type="chain" id="PRO_1000205523" description="DNA-directed RNA polymerase subunit omega">
    <location>
        <begin position="1"/>
        <end position="68"/>
    </location>
</feature>
<comment type="function">
    <text evidence="1">Promotes RNA polymerase assembly. Latches the N- and C-terminal regions of the beta' subunit thereby facilitating its interaction with the beta and alpha subunits.</text>
</comment>
<comment type="catalytic activity">
    <reaction evidence="1">
        <text>RNA(n) + a ribonucleoside 5'-triphosphate = RNA(n+1) + diphosphate</text>
        <dbReference type="Rhea" id="RHEA:21248"/>
        <dbReference type="Rhea" id="RHEA-COMP:14527"/>
        <dbReference type="Rhea" id="RHEA-COMP:17342"/>
        <dbReference type="ChEBI" id="CHEBI:33019"/>
        <dbReference type="ChEBI" id="CHEBI:61557"/>
        <dbReference type="ChEBI" id="CHEBI:140395"/>
        <dbReference type="EC" id="2.7.7.6"/>
    </reaction>
</comment>
<comment type="subunit">
    <text evidence="1">The RNAP catalytic core consists of 2 alpha, 1 beta, 1 beta' and 1 omega subunit. When a sigma factor is associated with the core the holoenzyme is formed, which can initiate transcription.</text>
</comment>
<comment type="similarity">
    <text evidence="1">Belongs to the RNA polymerase subunit omega family.</text>
</comment>
<keyword id="KW-0240">DNA-directed RNA polymerase</keyword>
<keyword id="KW-0548">Nucleotidyltransferase</keyword>
<keyword id="KW-0804">Transcription</keyword>
<keyword id="KW-0808">Transferase</keyword>
<name>RPOZ_LISMC</name>
<evidence type="ECO:0000255" key="1">
    <source>
        <dbReference type="HAMAP-Rule" id="MF_00366"/>
    </source>
</evidence>
<reference key="1">
    <citation type="journal article" date="2012" name="BMC Genomics">
        <title>Comparative genomics and transcriptomics of lineages I, II, and III strains of Listeria monocytogenes.</title>
        <authorList>
            <person name="Hain T."/>
            <person name="Ghai R."/>
            <person name="Billion A."/>
            <person name="Kuenne C.T."/>
            <person name="Steinweg C."/>
            <person name="Izar B."/>
            <person name="Mohamed W."/>
            <person name="Mraheil M."/>
            <person name="Domann E."/>
            <person name="Schaffrath S."/>
            <person name="Karst U."/>
            <person name="Goesmann A."/>
            <person name="Oehm S."/>
            <person name="Puhler A."/>
            <person name="Merkl R."/>
            <person name="Vorwerk S."/>
            <person name="Glaser P."/>
            <person name="Garrido P."/>
            <person name="Rusniok C."/>
            <person name="Buchrieser C."/>
            <person name="Goebel W."/>
            <person name="Chakraborty T."/>
        </authorList>
    </citation>
    <scope>NUCLEOTIDE SEQUENCE [LARGE SCALE GENOMIC DNA]</scope>
    <source>
        <strain>CLIP80459</strain>
    </source>
</reference>
<dbReference type="EC" id="2.7.7.6" evidence="1"/>
<dbReference type="EMBL" id="FM242711">
    <property type="protein sequence ID" value="CAS05600.1"/>
    <property type="molecule type" value="Genomic_DNA"/>
</dbReference>
<dbReference type="SMR" id="C1KWC5"/>
<dbReference type="KEGG" id="lmc:Lm4b_01842"/>
<dbReference type="HOGENOM" id="CLU_125406_6_0_9"/>
<dbReference type="GO" id="GO:0000428">
    <property type="term" value="C:DNA-directed RNA polymerase complex"/>
    <property type="evidence" value="ECO:0007669"/>
    <property type="project" value="UniProtKB-KW"/>
</dbReference>
<dbReference type="GO" id="GO:0003677">
    <property type="term" value="F:DNA binding"/>
    <property type="evidence" value="ECO:0007669"/>
    <property type="project" value="UniProtKB-UniRule"/>
</dbReference>
<dbReference type="GO" id="GO:0003899">
    <property type="term" value="F:DNA-directed RNA polymerase activity"/>
    <property type="evidence" value="ECO:0007669"/>
    <property type="project" value="UniProtKB-UniRule"/>
</dbReference>
<dbReference type="GO" id="GO:0006351">
    <property type="term" value="P:DNA-templated transcription"/>
    <property type="evidence" value="ECO:0007669"/>
    <property type="project" value="UniProtKB-UniRule"/>
</dbReference>
<dbReference type="Gene3D" id="3.90.940.10">
    <property type="match status" value="1"/>
</dbReference>
<dbReference type="HAMAP" id="MF_00366">
    <property type="entry name" value="RNApol_bact_RpoZ"/>
    <property type="match status" value="1"/>
</dbReference>
<dbReference type="InterPro" id="IPR003716">
    <property type="entry name" value="DNA-dir_RNA_pol_omega"/>
</dbReference>
<dbReference type="InterPro" id="IPR006110">
    <property type="entry name" value="Pol_omega/Rpo6/RPB6"/>
</dbReference>
<dbReference type="InterPro" id="IPR036161">
    <property type="entry name" value="RPB6/omega-like_sf"/>
</dbReference>
<dbReference type="NCBIfam" id="TIGR00690">
    <property type="entry name" value="rpoZ"/>
    <property type="match status" value="1"/>
</dbReference>
<dbReference type="PANTHER" id="PTHR34476">
    <property type="entry name" value="DNA-DIRECTED RNA POLYMERASE SUBUNIT OMEGA"/>
    <property type="match status" value="1"/>
</dbReference>
<dbReference type="PANTHER" id="PTHR34476:SF1">
    <property type="entry name" value="DNA-DIRECTED RNA POLYMERASE SUBUNIT OMEGA"/>
    <property type="match status" value="1"/>
</dbReference>
<dbReference type="Pfam" id="PF01192">
    <property type="entry name" value="RNA_pol_Rpb6"/>
    <property type="match status" value="1"/>
</dbReference>
<dbReference type="SMART" id="SM01409">
    <property type="entry name" value="RNA_pol_Rpb6"/>
    <property type="match status" value="1"/>
</dbReference>
<dbReference type="SUPFAM" id="SSF63562">
    <property type="entry name" value="RPB6/omega subunit-like"/>
    <property type="match status" value="1"/>
</dbReference>
<protein>
    <recommendedName>
        <fullName evidence="1">DNA-directed RNA polymerase subunit omega</fullName>
        <shortName evidence="1">RNAP omega subunit</shortName>
        <ecNumber evidence="1">2.7.7.6</ecNumber>
    </recommendedName>
    <alternativeName>
        <fullName evidence="1">RNA polymerase omega subunit</fullName>
    </alternativeName>
    <alternativeName>
        <fullName evidence="1">Transcriptase subunit omega</fullName>
    </alternativeName>
</protein>
<sequence>MMLYPSIDNLLLKIDSKYSLVTVAAKRARYMQLENDKGVLPSYQSDKFVGKALEEIHAGKLVLQNDDK</sequence>